<evidence type="ECO:0000255" key="1">
    <source>
        <dbReference type="HAMAP-Rule" id="MF_01603"/>
    </source>
</evidence>
<organism>
    <name type="scientific">Rhodopseudomonas palustris (strain BisA53)</name>
    <dbReference type="NCBI Taxonomy" id="316055"/>
    <lineage>
        <taxon>Bacteria</taxon>
        <taxon>Pseudomonadati</taxon>
        <taxon>Pseudomonadota</taxon>
        <taxon>Alphaproteobacteria</taxon>
        <taxon>Hyphomicrobiales</taxon>
        <taxon>Nitrobacteraceae</taxon>
        <taxon>Rhodopseudomonas</taxon>
    </lineage>
</organism>
<comment type="function">
    <text evidence="1">Catalyzes the phosphorylation of D-glycero-D-manno-heptose 7-phosphate at the C-1 position to selectively form D-glycero-beta-D-manno-heptose-1,7-bisphosphate.</text>
</comment>
<comment type="function">
    <text evidence="1">Catalyzes the ADP transfer from ATP to D-glycero-beta-D-manno-heptose 1-phosphate, yielding ADP-D-glycero-beta-D-manno-heptose.</text>
</comment>
<comment type="catalytic activity">
    <reaction evidence="1">
        <text>D-glycero-beta-D-manno-heptose 7-phosphate + ATP = D-glycero-beta-D-manno-heptose 1,7-bisphosphate + ADP + H(+)</text>
        <dbReference type="Rhea" id="RHEA:27473"/>
        <dbReference type="ChEBI" id="CHEBI:15378"/>
        <dbReference type="ChEBI" id="CHEBI:30616"/>
        <dbReference type="ChEBI" id="CHEBI:60204"/>
        <dbReference type="ChEBI" id="CHEBI:60208"/>
        <dbReference type="ChEBI" id="CHEBI:456216"/>
        <dbReference type="EC" id="2.7.1.167"/>
    </reaction>
</comment>
<comment type="catalytic activity">
    <reaction evidence="1">
        <text>D-glycero-beta-D-manno-heptose 1-phosphate + ATP + H(+) = ADP-D-glycero-beta-D-manno-heptose + diphosphate</text>
        <dbReference type="Rhea" id="RHEA:27465"/>
        <dbReference type="ChEBI" id="CHEBI:15378"/>
        <dbReference type="ChEBI" id="CHEBI:30616"/>
        <dbReference type="ChEBI" id="CHEBI:33019"/>
        <dbReference type="ChEBI" id="CHEBI:59967"/>
        <dbReference type="ChEBI" id="CHEBI:61593"/>
        <dbReference type="EC" id="2.7.7.70"/>
    </reaction>
</comment>
<comment type="pathway">
    <text evidence="1">Nucleotide-sugar biosynthesis; ADP-L-glycero-beta-D-manno-heptose biosynthesis; ADP-L-glycero-beta-D-manno-heptose from D-glycero-beta-D-manno-heptose 7-phosphate: step 1/4.</text>
</comment>
<comment type="pathway">
    <text evidence="1">Nucleotide-sugar biosynthesis; ADP-L-glycero-beta-D-manno-heptose biosynthesis; ADP-L-glycero-beta-D-manno-heptose from D-glycero-beta-D-manno-heptose 7-phosphate: step 3/4.</text>
</comment>
<comment type="subunit">
    <text evidence="1">Homodimer.</text>
</comment>
<comment type="similarity">
    <text evidence="1">In the N-terminal section; belongs to the carbohydrate kinase PfkB family.</text>
</comment>
<comment type="similarity">
    <text evidence="1">In the C-terminal section; belongs to the cytidylyltransferase family.</text>
</comment>
<feature type="chain" id="PRO_0000291684" description="Bifunctional protein HldE">
    <location>
        <begin position="1"/>
        <end position="490"/>
    </location>
</feature>
<feature type="region of interest" description="Ribokinase">
    <location>
        <begin position="1"/>
        <end position="330"/>
    </location>
</feature>
<feature type="region of interest" description="Cytidylyltransferase">
    <location>
        <begin position="358"/>
        <end position="490"/>
    </location>
</feature>
<feature type="active site" evidence="1">
    <location>
        <position position="275"/>
    </location>
</feature>
<feature type="binding site" evidence="1">
    <location>
        <begin position="205"/>
        <end position="208"/>
    </location>
    <ligand>
        <name>ATP</name>
        <dbReference type="ChEBI" id="CHEBI:30616"/>
    </ligand>
</feature>
<name>HLDE_RHOP5</name>
<dbReference type="EC" id="2.7.1.167" evidence="1"/>
<dbReference type="EC" id="2.7.7.70" evidence="1"/>
<dbReference type="EMBL" id="CP000463">
    <property type="protein sequence ID" value="ABJ05403.1"/>
    <property type="molecule type" value="Genomic_DNA"/>
</dbReference>
<dbReference type="SMR" id="Q07RN1"/>
<dbReference type="STRING" id="316055.RPE_1453"/>
<dbReference type="KEGG" id="rpe:RPE_1453"/>
<dbReference type="eggNOG" id="COG0615">
    <property type="taxonomic scope" value="Bacteria"/>
</dbReference>
<dbReference type="eggNOG" id="COG2870">
    <property type="taxonomic scope" value="Bacteria"/>
</dbReference>
<dbReference type="HOGENOM" id="CLU_021150_2_1_5"/>
<dbReference type="OrthoDB" id="9802794at2"/>
<dbReference type="UniPathway" id="UPA00356">
    <property type="reaction ID" value="UER00437"/>
</dbReference>
<dbReference type="UniPathway" id="UPA00356">
    <property type="reaction ID" value="UER00439"/>
</dbReference>
<dbReference type="GO" id="GO:0005829">
    <property type="term" value="C:cytosol"/>
    <property type="evidence" value="ECO:0007669"/>
    <property type="project" value="TreeGrafter"/>
</dbReference>
<dbReference type="GO" id="GO:0005524">
    <property type="term" value="F:ATP binding"/>
    <property type="evidence" value="ECO:0007669"/>
    <property type="project" value="UniProtKB-UniRule"/>
</dbReference>
<dbReference type="GO" id="GO:0033785">
    <property type="term" value="F:heptose 7-phosphate kinase activity"/>
    <property type="evidence" value="ECO:0007669"/>
    <property type="project" value="UniProtKB-UniRule"/>
</dbReference>
<dbReference type="GO" id="GO:0033786">
    <property type="term" value="F:heptose-1-phosphate adenylyltransferase activity"/>
    <property type="evidence" value="ECO:0007669"/>
    <property type="project" value="UniProtKB-UniRule"/>
</dbReference>
<dbReference type="GO" id="GO:0016773">
    <property type="term" value="F:phosphotransferase activity, alcohol group as acceptor"/>
    <property type="evidence" value="ECO:0007669"/>
    <property type="project" value="InterPro"/>
</dbReference>
<dbReference type="GO" id="GO:0097171">
    <property type="term" value="P:ADP-L-glycero-beta-D-manno-heptose biosynthetic process"/>
    <property type="evidence" value="ECO:0007669"/>
    <property type="project" value="UniProtKB-UniPathway"/>
</dbReference>
<dbReference type="CDD" id="cd01172">
    <property type="entry name" value="RfaE_like"/>
    <property type="match status" value="1"/>
</dbReference>
<dbReference type="Gene3D" id="3.40.1190.20">
    <property type="match status" value="1"/>
</dbReference>
<dbReference type="Gene3D" id="3.40.50.620">
    <property type="entry name" value="HUPs"/>
    <property type="match status" value="1"/>
</dbReference>
<dbReference type="HAMAP" id="MF_01603">
    <property type="entry name" value="HldE"/>
    <property type="match status" value="1"/>
</dbReference>
<dbReference type="InterPro" id="IPR023030">
    <property type="entry name" value="Bifunc_HldE"/>
</dbReference>
<dbReference type="InterPro" id="IPR002173">
    <property type="entry name" value="Carboh/pur_kinase_PfkB_CS"/>
</dbReference>
<dbReference type="InterPro" id="IPR004821">
    <property type="entry name" value="Cyt_trans-like"/>
</dbReference>
<dbReference type="InterPro" id="IPR011611">
    <property type="entry name" value="PfkB_dom"/>
</dbReference>
<dbReference type="InterPro" id="IPR011913">
    <property type="entry name" value="RfaE_dom_I"/>
</dbReference>
<dbReference type="InterPro" id="IPR011914">
    <property type="entry name" value="RfaE_dom_II"/>
</dbReference>
<dbReference type="InterPro" id="IPR029056">
    <property type="entry name" value="Ribokinase-like"/>
</dbReference>
<dbReference type="InterPro" id="IPR014729">
    <property type="entry name" value="Rossmann-like_a/b/a_fold"/>
</dbReference>
<dbReference type="NCBIfam" id="TIGR00125">
    <property type="entry name" value="cyt_tran_rel"/>
    <property type="match status" value="1"/>
</dbReference>
<dbReference type="NCBIfam" id="TIGR02198">
    <property type="entry name" value="rfaE_dom_I"/>
    <property type="match status" value="1"/>
</dbReference>
<dbReference type="NCBIfam" id="TIGR02199">
    <property type="entry name" value="rfaE_dom_II"/>
    <property type="match status" value="1"/>
</dbReference>
<dbReference type="PANTHER" id="PTHR46969">
    <property type="entry name" value="BIFUNCTIONAL PROTEIN HLDE"/>
    <property type="match status" value="1"/>
</dbReference>
<dbReference type="PANTHER" id="PTHR46969:SF1">
    <property type="entry name" value="BIFUNCTIONAL PROTEIN HLDE"/>
    <property type="match status" value="1"/>
</dbReference>
<dbReference type="Pfam" id="PF01467">
    <property type="entry name" value="CTP_transf_like"/>
    <property type="match status" value="1"/>
</dbReference>
<dbReference type="Pfam" id="PF00294">
    <property type="entry name" value="PfkB"/>
    <property type="match status" value="1"/>
</dbReference>
<dbReference type="SUPFAM" id="SSF52374">
    <property type="entry name" value="Nucleotidylyl transferase"/>
    <property type="match status" value="1"/>
</dbReference>
<dbReference type="SUPFAM" id="SSF53613">
    <property type="entry name" value="Ribokinase-like"/>
    <property type="match status" value="1"/>
</dbReference>
<dbReference type="PROSITE" id="PS00583">
    <property type="entry name" value="PFKB_KINASES_1"/>
    <property type="match status" value="1"/>
</dbReference>
<reference key="1">
    <citation type="submission" date="2006-09" db="EMBL/GenBank/DDBJ databases">
        <title>Complete sequence of Rhodopseudomonas palustris BisA53.</title>
        <authorList>
            <consortium name="US DOE Joint Genome Institute"/>
            <person name="Copeland A."/>
            <person name="Lucas S."/>
            <person name="Lapidus A."/>
            <person name="Barry K."/>
            <person name="Detter J.C."/>
            <person name="Glavina del Rio T."/>
            <person name="Hammon N."/>
            <person name="Israni S."/>
            <person name="Dalin E."/>
            <person name="Tice H."/>
            <person name="Pitluck S."/>
            <person name="Chain P."/>
            <person name="Malfatti S."/>
            <person name="Shin M."/>
            <person name="Vergez L."/>
            <person name="Schmutz J."/>
            <person name="Larimer F."/>
            <person name="Land M."/>
            <person name="Hauser L."/>
            <person name="Pelletier D.A."/>
            <person name="Kyrpides N."/>
            <person name="Kim E."/>
            <person name="Harwood C.S."/>
            <person name="Oda Y."/>
            <person name="Richardson P."/>
        </authorList>
    </citation>
    <scope>NUCLEOTIDE SEQUENCE [LARGE SCALE GENOMIC DNA]</scope>
    <source>
        <strain>BisA53</strain>
    </source>
</reference>
<protein>
    <recommendedName>
        <fullName evidence="1">Bifunctional protein HldE</fullName>
    </recommendedName>
    <domain>
        <recommendedName>
            <fullName evidence="1">D-beta-D-heptose 7-phosphate kinase</fullName>
            <ecNumber evidence="1">2.7.1.167</ecNumber>
        </recommendedName>
        <alternativeName>
            <fullName evidence="1">D-beta-D-heptose 7-phosphotransferase</fullName>
        </alternativeName>
        <alternativeName>
            <fullName evidence="1">D-glycero-beta-D-manno-heptose-7-phosphate kinase</fullName>
        </alternativeName>
    </domain>
    <domain>
        <recommendedName>
            <fullName evidence="1">D-beta-D-heptose 1-phosphate adenylyltransferase</fullName>
            <ecNumber evidence="1">2.7.7.70</ecNumber>
        </recommendedName>
        <alternativeName>
            <fullName evidence="1">D-glycero-beta-D-manno-heptose 1-phosphate adenylyltransferase</fullName>
        </alternativeName>
    </domain>
</protein>
<accession>Q07RN1</accession>
<proteinExistence type="inferred from homology"/>
<keyword id="KW-0067">ATP-binding</keyword>
<keyword id="KW-0119">Carbohydrate metabolism</keyword>
<keyword id="KW-0418">Kinase</keyword>
<keyword id="KW-0511">Multifunctional enzyme</keyword>
<keyword id="KW-0547">Nucleotide-binding</keyword>
<keyword id="KW-0548">Nucleotidyltransferase</keyword>
<keyword id="KW-0808">Transferase</keyword>
<gene>
    <name evidence="1" type="primary">hldE</name>
    <name type="ordered locus">RPE_1453</name>
</gene>
<sequence>MLDFEQLSPAIPLQSVLCVGDLMLDEFVYGEVSRISPEAPAPVIAAQRSEIDVGGAGNVARNIASLGARCVFIGLVGDDDAGRTLQTTLAKDALITPVLVCDPSRPTTRKVRFVSEHFSTHMLRADWEVAAPASAAVEQQLIDAVLKQLPAADIVLLSDYAKGVLTARLIRETIDAAKKLGKRVIVDPKSPNFALYRGATLLTPNRKEFCEATRSRADSAAEIATAAREAMDVADCEALLVTQSERGMTLVVREGEAIHVPAHPVKVRDVSGAGDTVAAVLAVMLAAGADWDIALRAANAGAAVAVSKKGTASVSLAELRRKILPHAFLAAEEKIVAAGGDLAPHLAEWRAEGFRIGFTNGCFDILHPGHVKVLTAARAACDRLIVGLNSDASVRRLKGETRPVQDERARAEVLAALEAVDLVAIFDEDTPLRLITEIKPSVLVKGGDYTREQVVGHEVVAANGGEVLLIDILPGHSTTSLVARAQNGKS</sequence>